<gene>
    <name type="primary">yidA</name>
    <name type="ordered locus">c4619</name>
</gene>
<dbReference type="EC" id="3.1.3.23"/>
<dbReference type="EMBL" id="AE014075">
    <property type="protein sequence ID" value="AAN83052.1"/>
    <property type="molecule type" value="Genomic_DNA"/>
</dbReference>
<dbReference type="RefSeq" id="WP_000985549.1">
    <property type="nucleotide sequence ID" value="NZ_CP051263.1"/>
</dbReference>
<dbReference type="SMR" id="P0A8Y6"/>
<dbReference type="STRING" id="199310.c4619"/>
<dbReference type="GeneID" id="93778438"/>
<dbReference type="KEGG" id="ecc:c4619"/>
<dbReference type="eggNOG" id="COG0561">
    <property type="taxonomic scope" value="Bacteria"/>
</dbReference>
<dbReference type="HOGENOM" id="CLU_044146_0_1_6"/>
<dbReference type="BioCyc" id="ECOL199310:C4619-MONOMER"/>
<dbReference type="Proteomes" id="UP000001410">
    <property type="component" value="Chromosome"/>
</dbReference>
<dbReference type="GO" id="GO:0005829">
    <property type="term" value="C:cytosol"/>
    <property type="evidence" value="ECO:0007669"/>
    <property type="project" value="TreeGrafter"/>
</dbReference>
<dbReference type="GO" id="GO:0000287">
    <property type="term" value="F:magnesium ion binding"/>
    <property type="evidence" value="ECO:0000250"/>
    <property type="project" value="UniProtKB"/>
</dbReference>
<dbReference type="GO" id="GO:0016791">
    <property type="term" value="F:phosphatase activity"/>
    <property type="evidence" value="ECO:0000250"/>
    <property type="project" value="UniProtKB"/>
</dbReference>
<dbReference type="GO" id="GO:0050308">
    <property type="term" value="F:sugar-phosphatase activity"/>
    <property type="evidence" value="ECO:0000250"/>
    <property type="project" value="UniProtKB"/>
</dbReference>
<dbReference type="GO" id="GO:0016311">
    <property type="term" value="P:dephosphorylation"/>
    <property type="evidence" value="ECO:0000250"/>
    <property type="project" value="UniProtKB"/>
</dbReference>
<dbReference type="CDD" id="cd07516">
    <property type="entry name" value="HAD_Pase"/>
    <property type="match status" value="1"/>
</dbReference>
<dbReference type="FunFam" id="3.30.1240.10:FF:000001">
    <property type="entry name" value="Sugar phosphatase YidA"/>
    <property type="match status" value="1"/>
</dbReference>
<dbReference type="Gene3D" id="3.30.1240.10">
    <property type="match status" value="1"/>
</dbReference>
<dbReference type="Gene3D" id="3.40.50.1000">
    <property type="entry name" value="HAD superfamily/HAD-like"/>
    <property type="match status" value="1"/>
</dbReference>
<dbReference type="InterPro" id="IPR000150">
    <property type="entry name" value="Cof"/>
</dbReference>
<dbReference type="InterPro" id="IPR036412">
    <property type="entry name" value="HAD-like_sf"/>
</dbReference>
<dbReference type="InterPro" id="IPR006379">
    <property type="entry name" value="HAD-SF_hydro_IIB"/>
</dbReference>
<dbReference type="InterPro" id="IPR023214">
    <property type="entry name" value="HAD_sf"/>
</dbReference>
<dbReference type="NCBIfam" id="TIGR00099">
    <property type="entry name" value="Cof-subfamily"/>
    <property type="match status" value="1"/>
</dbReference>
<dbReference type="NCBIfam" id="TIGR01484">
    <property type="entry name" value="HAD-SF-IIB"/>
    <property type="match status" value="1"/>
</dbReference>
<dbReference type="NCBIfam" id="NF007806">
    <property type="entry name" value="PRK10513.1"/>
    <property type="match status" value="1"/>
</dbReference>
<dbReference type="PANTHER" id="PTHR10000:SF8">
    <property type="entry name" value="HAD SUPERFAMILY HYDROLASE-LIKE, TYPE 3"/>
    <property type="match status" value="1"/>
</dbReference>
<dbReference type="PANTHER" id="PTHR10000">
    <property type="entry name" value="PHOSPHOSERINE PHOSPHATASE"/>
    <property type="match status" value="1"/>
</dbReference>
<dbReference type="Pfam" id="PF08282">
    <property type="entry name" value="Hydrolase_3"/>
    <property type="match status" value="1"/>
</dbReference>
<dbReference type="SFLD" id="SFLDG01144">
    <property type="entry name" value="C2.B.4:_PGP_Like"/>
    <property type="match status" value="1"/>
</dbReference>
<dbReference type="SFLD" id="SFLDG01140">
    <property type="entry name" value="C2.B:_Phosphomannomutase_and_P"/>
    <property type="match status" value="1"/>
</dbReference>
<dbReference type="SUPFAM" id="SSF56784">
    <property type="entry name" value="HAD-like"/>
    <property type="match status" value="1"/>
</dbReference>
<dbReference type="PROSITE" id="PS01228">
    <property type="entry name" value="COF_1"/>
    <property type="match status" value="1"/>
</dbReference>
<dbReference type="PROSITE" id="PS01229">
    <property type="entry name" value="COF_2"/>
    <property type="match status" value="1"/>
</dbReference>
<sequence length="270" mass="29721">MAIKLIAIDMDGTLLLPDHTISPAVKNAIAAARARGVNVVLTTGRPYAGVHNYLKELHMEQPGDYCITYNGALVQKAADGSTVAQTALSYDDYRFLEKLSREVGSHFHALDRTTLYTANRDISYYTVHESFVATIPLVFCEAEKMDPNTQFLKVMMIDEPAILDQAIARIPQEVKEKYTVLKSAPYFLEILDKRVNKGTGVKSLADVLGIKPEEIMAIGDQENDIAMIEYAGVGVAMDNAIPSVKEVANFVTKSNLEDGVAFAIEKYVLN</sequence>
<comment type="function">
    <text evidence="1">Catalyzes the dephosphorylation of different sugar phosphates.</text>
</comment>
<comment type="catalytic activity">
    <reaction>
        <text>sugar phosphate + H2O = sugar + phosphate.</text>
        <dbReference type="EC" id="3.1.3.23"/>
    </reaction>
</comment>
<comment type="cofactor">
    <cofactor evidence="1">
        <name>Mg(2+)</name>
        <dbReference type="ChEBI" id="CHEBI:18420"/>
    </cofactor>
</comment>
<comment type="subunit">
    <text evidence="1">Homodimer.</text>
</comment>
<comment type="similarity">
    <text evidence="2">Belongs to the HAD-like hydrolase superfamily. Cof family.</text>
</comment>
<evidence type="ECO:0000250" key="1"/>
<evidence type="ECO:0000305" key="2"/>
<name>YIDA_ECOL6</name>
<feature type="chain" id="PRO_0000054424" description="Sugar phosphatase YidA">
    <location>
        <begin position="1"/>
        <end position="270"/>
    </location>
</feature>
<feature type="active site" description="Nucleophile" evidence="1">
    <location>
        <position position="9"/>
    </location>
</feature>
<feature type="binding site" evidence="1">
    <location>
        <position position="9"/>
    </location>
    <ligand>
        <name>Mg(2+)</name>
        <dbReference type="ChEBI" id="CHEBI:18420"/>
    </ligand>
</feature>
<feature type="binding site" evidence="1">
    <location>
        <position position="10"/>
    </location>
    <ligand>
        <name>phosphate</name>
        <dbReference type="ChEBI" id="CHEBI:43474"/>
    </ligand>
</feature>
<feature type="binding site" evidence="1">
    <location>
        <position position="11"/>
    </location>
    <ligand>
        <name>Mg(2+)</name>
        <dbReference type="ChEBI" id="CHEBI:18420"/>
    </ligand>
</feature>
<feature type="binding site" evidence="1">
    <location>
        <begin position="43"/>
        <end position="44"/>
    </location>
    <ligand>
        <name>phosphate</name>
        <dbReference type="ChEBI" id="CHEBI:43474"/>
    </ligand>
</feature>
<feature type="binding site" evidence="1">
    <location>
        <position position="197"/>
    </location>
    <ligand>
        <name>phosphate</name>
        <dbReference type="ChEBI" id="CHEBI:43474"/>
    </ligand>
</feature>
<feature type="binding site" evidence="1">
    <location>
        <position position="220"/>
    </location>
    <ligand>
        <name>Mg(2+)</name>
        <dbReference type="ChEBI" id="CHEBI:18420"/>
    </ligand>
</feature>
<feature type="binding site" evidence="1">
    <location>
        <position position="223"/>
    </location>
    <ligand>
        <name>phosphate</name>
        <dbReference type="ChEBI" id="CHEBI:43474"/>
    </ligand>
</feature>
<keyword id="KW-0378">Hydrolase</keyword>
<keyword id="KW-0460">Magnesium</keyword>
<keyword id="KW-0479">Metal-binding</keyword>
<keyword id="KW-1185">Reference proteome</keyword>
<protein>
    <recommendedName>
        <fullName>Sugar phosphatase YidA</fullName>
        <ecNumber>3.1.3.23</ecNumber>
    </recommendedName>
</protein>
<reference key="1">
    <citation type="journal article" date="2002" name="Proc. Natl. Acad. Sci. U.S.A.">
        <title>Extensive mosaic structure revealed by the complete genome sequence of uropathogenic Escherichia coli.</title>
        <authorList>
            <person name="Welch R.A."/>
            <person name="Burland V."/>
            <person name="Plunkett G. III"/>
            <person name="Redford P."/>
            <person name="Roesch P."/>
            <person name="Rasko D."/>
            <person name="Buckles E.L."/>
            <person name="Liou S.-R."/>
            <person name="Boutin A."/>
            <person name="Hackett J."/>
            <person name="Stroud D."/>
            <person name="Mayhew G.F."/>
            <person name="Rose D.J."/>
            <person name="Zhou S."/>
            <person name="Schwartz D.C."/>
            <person name="Perna N.T."/>
            <person name="Mobley H.L.T."/>
            <person name="Donnenberg M.S."/>
            <person name="Blattner F.R."/>
        </authorList>
    </citation>
    <scope>NUCLEOTIDE SEQUENCE [LARGE SCALE GENOMIC DNA]</scope>
    <source>
        <strain>CFT073 / ATCC 700928 / UPEC</strain>
    </source>
</reference>
<proteinExistence type="inferred from homology"/>
<organism>
    <name type="scientific">Escherichia coli O6:H1 (strain CFT073 / ATCC 700928 / UPEC)</name>
    <dbReference type="NCBI Taxonomy" id="199310"/>
    <lineage>
        <taxon>Bacteria</taxon>
        <taxon>Pseudomonadati</taxon>
        <taxon>Pseudomonadota</taxon>
        <taxon>Gammaproteobacteria</taxon>
        <taxon>Enterobacterales</taxon>
        <taxon>Enterobacteriaceae</taxon>
        <taxon>Escherichia</taxon>
    </lineage>
</organism>
<accession>P0A8Y6</accession>
<accession>P09997</accession>
<accession>P76737</accession>